<sequence>MGAMAYPLLLCLLLAQLGLGAVGASRDPQGRPDSPRERTPKGKPHAQQPGRASASDSSAPWSRSTDGTILAQKLAEEVPMDVASYLYTGDSHQLKRANCSGRYELAGLPGKWPALASAHPSLHRALDTLTHATNFLNVMLQSNKSREQNLQDDLDWYQALVWSLLEGEPSISRAAITFSTDSLSAPAPQVFLQATREESRILLQDLSSSAPHLANATLETEWFHGLRRKWRPHLHRRGPNQGPRGLGHSWRRKDGLGGDKSHFKWSPPYLECENGSYKPGWLVTLSSAIYGLQPNLVPEFRGVMKVDINLQKVDIDQCSSDGWFSGTHKCHLNNSECMPIKGLGFVLGAYECICKAGFYHPGVLPVNNFRRRGPDQHISGSTKDVSEEAYVCLPCREGCPFCADDSPCFVQEDKYLRLAIISFQALCMLLDFVSMLVVYHFRKAKSIRASGLILLETILFGSLLLYFPVVILYFEPSTFRCILLRWARLLGFATVYGTVTLKLHRVLKVFLSRTAQRIPYMTGGRVMRMLAVILLVVFWFLIGWTSSVCQNLEKQISLIGQGKTSDHLIFNMCLIDRWDYMTAVAEFLFLLWGVYLCYAVRTVPSAFHEPRYMAVAVHNELIISAIFHTIRFVLASRLQSDWMLMLYFAHTHLTVTVTIGLLLIPKFSHSSNNPRDDIATEAYEDELDMGRSGSYLNSSINSAWSEHSLDPEDIRDELKKLYAQLEIYKRKKMITNNPHLQKKRCSKKGLGRSIMRRITEIPETVSRQCSKEDKEGADHGTAKGTALIRKNPPESSGNTGKSKEETLKNRVFSLKKSHSTYDHVRDQTEESSSLPTESQEEETTENSTLESLSGKKLTQKLKEDSEAESTESVPLVCKSASAHNLSSEKKTGHPRTSMLQKSLSVIASAKEKTLGLAGKTQTAGVEERTKSQKPLPKDKETNRNHSNSDNTETKDPAPQNSNPAEEPRKPQKSGIMKQQRVNPTTANSDLNPGTTQMKDNFDIGEVCPWEVYDLTPGPVPSESKVQKHVSIVASEMEKNPTFSLKEKSHHKPKAAEVCQQSNQKRIDKAEVCLWESQGQSILEDEKLLISKTPVLPERAKEENGGQPRAANVCAGQSEELPPKAVASKTENENLNQIGHQEKKTSSSEENVRGSYNSSNNFQQPLTSRAEVCPWEFETPAQPNAGRSVALPASSALSANKIAGPRKEEIWDSFKV</sequence>
<gene>
    <name evidence="15 18" type="primary">GPR158</name>
    <name evidence="13" type="synonym">KIAA1136</name>
</gene>
<organism>
    <name type="scientific">Homo sapiens</name>
    <name type="common">Human</name>
    <dbReference type="NCBI Taxonomy" id="9606"/>
    <lineage>
        <taxon>Eukaryota</taxon>
        <taxon>Metazoa</taxon>
        <taxon>Chordata</taxon>
        <taxon>Craniata</taxon>
        <taxon>Vertebrata</taxon>
        <taxon>Euteleostomi</taxon>
        <taxon>Mammalia</taxon>
        <taxon>Eutheria</taxon>
        <taxon>Euarchontoglires</taxon>
        <taxon>Primates</taxon>
        <taxon>Haplorrhini</taxon>
        <taxon>Catarrhini</taxon>
        <taxon>Hominidae</taxon>
        <taxon>Homo</taxon>
    </lineage>
</organism>
<dbReference type="EMBL" id="AY528411">
    <property type="protein sequence ID" value="AAS18315.1"/>
    <property type="status" value="ALT_INIT"/>
    <property type="molecule type" value="mRNA"/>
</dbReference>
<dbReference type="EMBL" id="AL161654">
    <property type="status" value="NOT_ANNOTATED_CDS"/>
    <property type="molecule type" value="Genomic_DNA"/>
</dbReference>
<dbReference type="EMBL" id="AL355587">
    <property type="status" value="NOT_ANNOTATED_CDS"/>
    <property type="molecule type" value="Genomic_DNA"/>
</dbReference>
<dbReference type="EMBL" id="AL139821">
    <property type="status" value="NOT_ANNOTATED_CDS"/>
    <property type="molecule type" value="Genomic_DNA"/>
</dbReference>
<dbReference type="EMBL" id="AB032962">
    <property type="protein sequence ID" value="BAA86450.2"/>
    <property type="molecule type" value="mRNA"/>
</dbReference>
<dbReference type="CCDS" id="CCDS31166.1"/>
<dbReference type="RefSeq" id="NP_065803.2">
    <property type="nucleotide sequence ID" value="NM_020752.3"/>
</dbReference>
<dbReference type="PDB" id="7EWL">
    <property type="method" value="EM"/>
    <property type="resolution" value="3.52 A"/>
    <property type="chains" value="A/B=24-710"/>
</dbReference>
<dbReference type="PDB" id="7EWP">
    <property type="method" value="EM"/>
    <property type="resolution" value="4.30 A"/>
    <property type="chains" value="A/B=1-863"/>
</dbReference>
<dbReference type="PDB" id="7EWR">
    <property type="method" value="EM"/>
    <property type="resolution" value="4.70 A"/>
    <property type="chains" value="A/B=1-863"/>
</dbReference>
<dbReference type="PDB" id="7SHE">
    <property type="method" value="EM"/>
    <property type="resolution" value="3.40 A"/>
    <property type="chains" value="A/B=1-775"/>
</dbReference>
<dbReference type="PDB" id="7SHF">
    <property type="method" value="EM"/>
    <property type="resolution" value="3.40 A"/>
    <property type="chains" value="A/B=1-775"/>
</dbReference>
<dbReference type="PDBsum" id="7EWL"/>
<dbReference type="PDBsum" id="7EWP"/>
<dbReference type="PDBsum" id="7EWR"/>
<dbReference type="PDBsum" id="7SHE"/>
<dbReference type="PDBsum" id="7SHF"/>
<dbReference type="EMDB" id="EMD-25125"/>
<dbReference type="EMDB" id="EMD-25126"/>
<dbReference type="EMDB" id="EMD-31351"/>
<dbReference type="EMDB" id="EMD-31360"/>
<dbReference type="EMDB" id="EMD-31363"/>
<dbReference type="EMDB" id="EMD-31365"/>
<dbReference type="EMDB" id="EMD-31366"/>
<dbReference type="SMR" id="Q5T848"/>
<dbReference type="BioGRID" id="121576">
    <property type="interactions" value="7"/>
</dbReference>
<dbReference type="CORUM" id="Q5T848"/>
<dbReference type="FunCoup" id="Q5T848">
    <property type="interactions" value="510"/>
</dbReference>
<dbReference type="IntAct" id="Q5T848">
    <property type="interactions" value="2"/>
</dbReference>
<dbReference type="STRING" id="9606.ENSP00000365529"/>
<dbReference type="ChEMBL" id="CHEMBL4523874"/>
<dbReference type="TCDB" id="9.A.14.15.5">
    <property type="family name" value="the g-protein-coupled receptor (gpcr) family"/>
</dbReference>
<dbReference type="GlyCosmos" id="Q5T848">
    <property type="glycosylation" value="5 sites, No reported glycans"/>
</dbReference>
<dbReference type="GlyGen" id="Q5T848">
    <property type="glycosylation" value="6 sites, 1 N-linked glycan (1 site)"/>
</dbReference>
<dbReference type="iPTMnet" id="Q5T848"/>
<dbReference type="PhosphoSitePlus" id="Q5T848"/>
<dbReference type="SwissPalm" id="Q5T848"/>
<dbReference type="BioMuta" id="GPR158"/>
<dbReference type="DMDM" id="67461010"/>
<dbReference type="jPOST" id="Q5T848"/>
<dbReference type="MassIVE" id="Q5T848"/>
<dbReference type="PaxDb" id="9606-ENSP00000365529"/>
<dbReference type="PeptideAtlas" id="Q5T848"/>
<dbReference type="ProteomicsDB" id="64705"/>
<dbReference type="ABCD" id="Q5T848">
    <property type="antibodies" value="1 sequenced antibody"/>
</dbReference>
<dbReference type="Antibodypedia" id="2922">
    <property type="antibodies" value="96 antibodies from 20 providers"/>
</dbReference>
<dbReference type="DNASU" id="57512"/>
<dbReference type="Ensembl" id="ENST00000376351.4">
    <property type="protein sequence ID" value="ENSP00000365529.3"/>
    <property type="gene ID" value="ENSG00000151025.11"/>
</dbReference>
<dbReference type="GeneID" id="57512"/>
<dbReference type="KEGG" id="hsa:57512"/>
<dbReference type="MANE-Select" id="ENST00000376351.4">
    <property type="protein sequence ID" value="ENSP00000365529.3"/>
    <property type="RefSeq nucleotide sequence ID" value="NM_020752.3"/>
    <property type="RefSeq protein sequence ID" value="NP_065803.2"/>
</dbReference>
<dbReference type="UCSC" id="uc001isj.4">
    <property type="organism name" value="human"/>
</dbReference>
<dbReference type="AGR" id="HGNC:23689"/>
<dbReference type="CTD" id="57512"/>
<dbReference type="DisGeNET" id="57512"/>
<dbReference type="GeneCards" id="GPR158"/>
<dbReference type="HGNC" id="HGNC:23689">
    <property type="gene designation" value="GPR158"/>
</dbReference>
<dbReference type="HPA" id="ENSG00000151025">
    <property type="expression patterns" value="Group enriched (brain, retina)"/>
</dbReference>
<dbReference type="MIM" id="614573">
    <property type="type" value="gene"/>
</dbReference>
<dbReference type="neXtProt" id="NX_Q5T848"/>
<dbReference type="OpenTargets" id="ENSG00000151025"/>
<dbReference type="PharmGKB" id="PA134939018"/>
<dbReference type="VEuPathDB" id="HostDB:ENSG00000151025"/>
<dbReference type="eggNOG" id="KOG4418">
    <property type="taxonomic scope" value="Eukaryota"/>
</dbReference>
<dbReference type="GeneTree" id="ENSGT00940000155918"/>
<dbReference type="HOGENOM" id="CLU_006832_1_0_1"/>
<dbReference type="InParanoid" id="Q5T848"/>
<dbReference type="OMA" id="THVCLPC"/>
<dbReference type="OrthoDB" id="2129233at2759"/>
<dbReference type="PAN-GO" id="Q5T848">
    <property type="GO annotations" value="0 GO annotations based on evolutionary models"/>
</dbReference>
<dbReference type="PhylomeDB" id="Q5T848"/>
<dbReference type="TreeFam" id="TF319114"/>
<dbReference type="PathwayCommons" id="Q5T848"/>
<dbReference type="SignaLink" id="Q5T848"/>
<dbReference type="BioGRID-ORCS" id="57512">
    <property type="hits" value="8 hits in 1147 CRISPR screens"/>
</dbReference>
<dbReference type="CD-CODE" id="FB4E32DD">
    <property type="entry name" value="Presynaptic clusters and postsynaptic densities"/>
</dbReference>
<dbReference type="ChiTaRS" id="GPR158">
    <property type="organism name" value="human"/>
</dbReference>
<dbReference type="GeneWiki" id="GPR158"/>
<dbReference type="GenomeRNAi" id="57512"/>
<dbReference type="Pharos" id="Q5T848">
    <property type="development level" value="Tbio"/>
</dbReference>
<dbReference type="PRO" id="PR:Q5T848"/>
<dbReference type="Proteomes" id="UP000005640">
    <property type="component" value="Chromosome 10"/>
</dbReference>
<dbReference type="RNAct" id="Q5T848">
    <property type="molecule type" value="protein"/>
</dbReference>
<dbReference type="Bgee" id="ENSG00000151025">
    <property type="expression patterns" value="Expressed in endothelial cell and 97 other cell types or tissues"/>
</dbReference>
<dbReference type="ExpressionAtlas" id="Q5T848">
    <property type="expression patterns" value="baseline and differential"/>
</dbReference>
<dbReference type="GO" id="GO:0042995">
    <property type="term" value="C:cell projection"/>
    <property type="evidence" value="ECO:0007669"/>
    <property type="project" value="UniProtKB-KW"/>
</dbReference>
<dbReference type="GO" id="GO:0005634">
    <property type="term" value="C:nucleus"/>
    <property type="evidence" value="ECO:0007669"/>
    <property type="project" value="UniProtKB-SubCell"/>
</dbReference>
<dbReference type="GO" id="GO:0005886">
    <property type="term" value="C:plasma membrane"/>
    <property type="evidence" value="ECO:0000314"/>
    <property type="project" value="UniProtKB"/>
</dbReference>
<dbReference type="GO" id="GO:0098839">
    <property type="term" value="C:postsynaptic density membrane"/>
    <property type="evidence" value="ECO:0007669"/>
    <property type="project" value="Ensembl"/>
</dbReference>
<dbReference type="GO" id="GO:0045211">
    <property type="term" value="C:postsynaptic membrane"/>
    <property type="evidence" value="ECO:0000250"/>
    <property type="project" value="UniProtKB"/>
</dbReference>
<dbReference type="GO" id="GO:0042734">
    <property type="term" value="C:presynaptic membrane"/>
    <property type="evidence" value="ECO:0007669"/>
    <property type="project" value="UniProtKB-SubCell"/>
</dbReference>
<dbReference type="GO" id="GO:0008047">
    <property type="term" value="F:enzyme activator activity"/>
    <property type="evidence" value="ECO:0000314"/>
    <property type="project" value="UniProtKB"/>
</dbReference>
<dbReference type="GO" id="GO:0160079">
    <property type="term" value="F:G protein-coupled glycine receptor activity"/>
    <property type="evidence" value="ECO:0000314"/>
    <property type="project" value="UniProtKB"/>
</dbReference>
<dbReference type="GO" id="GO:0004888">
    <property type="term" value="F:transmembrane signaling receptor activity"/>
    <property type="evidence" value="ECO:0000250"/>
    <property type="project" value="UniProtKB"/>
</dbReference>
<dbReference type="GO" id="GO:0007420">
    <property type="term" value="P:brain development"/>
    <property type="evidence" value="ECO:0000250"/>
    <property type="project" value="UniProt"/>
</dbReference>
<dbReference type="GO" id="GO:0050890">
    <property type="term" value="P:cognition"/>
    <property type="evidence" value="ECO:0000250"/>
    <property type="project" value="UniProtKB"/>
</dbReference>
<dbReference type="GO" id="GO:0007186">
    <property type="term" value="P:G protein-coupled receptor signaling pathway"/>
    <property type="evidence" value="ECO:0000314"/>
    <property type="project" value="UniProtKB"/>
</dbReference>
<dbReference type="GO" id="GO:0001956">
    <property type="term" value="P:positive regulation of neurotransmitter secretion"/>
    <property type="evidence" value="ECO:0000250"/>
    <property type="project" value="UniProt"/>
</dbReference>
<dbReference type="GO" id="GO:0072659">
    <property type="term" value="P:protein localization to plasma membrane"/>
    <property type="evidence" value="ECO:0000314"/>
    <property type="project" value="UniProtKB"/>
</dbReference>
<dbReference type="GO" id="GO:0008277">
    <property type="term" value="P:regulation of G protein-coupled receptor signaling pathway"/>
    <property type="evidence" value="ECO:0000314"/>
    <property type="project" value="UniProtKB"/>
</dbReference>
<dbReference type="GO" id="GO:0050807">
    <property type="term" value="P:regulation of synapse organization"/>
    <property type="evidence" value="ECO:0000250"/>
    <property type="project" value="UniProtKB"/>
</dbReference>
<dbReference type="CDD" id="cd15293">
    <property type="entry name" value="7tmC_GPR158-like"/>
    <property type="match status" value="1"/>
</dbReference>
<dbReference type="Gene3D" id="3.30.450.20">
    <property type="entry name" value="PAS domain"/>
    <property type="match status" value="1"/>
</dbReference>
<dbReference type="InterPro" id="IPR017978">
    <property type="entry name" value="GPCR_3_C"/>
</dbReference>
<dbReference type="InterPro" id="IPR043458">
    <property type="entry name" value="GPR158/179"/>
</dbReference>
<dbReference type="InterPro" id="IPR054714">
    <property type="entry name" value="GPR158_179_extracellular"/>
</dbReference>
<dbReference type="PANTHER" id="PTHR32546">
    <property type="entry name" value="G-PROTEIN COUPLED RECEPTOR 158-RELATED"/>
    <property type="match status" value="1"/>
</dbReference>
<dbReference type="PANTHER" id="PTHR32546:SF11">
    <property type="entry name" value="G-PROTEIN COUPLED RECEPTOR 158-RELATED"/>
    <property type="match status" value="1"/>
</dbReference>
<dbReference type="Pfam" id="PF00003">
    <property type="entry name" value="7tm_3"/>
    <property type="match status" value="1"/>
</dbReference>
<dbReference type="Pfam" id="PF22572">
    <property type="entry name" value="GPR158_179_EC"/>
    <property type="match status" value="1"/>
</dbReference>
<dbReference type="PROSITE" id="PS50259">
    <property type="entry name" value="G_PROTEIN_RECEP_F3_4"/>
    <property type="match status" value="1"/>
</dbReference>
<feature type="signal peptide" evidence="3">
    <location>
        <begin position="1"/>
        <end position="23"/>
    </location>
</feature>
<feature type="chain" id="PRO_0000012969" description="Metabotropic glycine receptor">
    <location>
        <begin position="24"/>
        <end position="1215"/>
    </location>
</feature>
<feature type="topological domain" description="Extracellular" evidence="9 10 19 20 21 22 23">
    <location>
        <begin position="24"/>
        <end position="417"/>
    </location>
</feature>
<feature type="transmembrane region" description="Helical; Name=1" evidence="9 10 19 20 21 22 23">
    <location>
        <begin position="418"/>
        <end position="439"/>
    </location>
</feature>
<feature type="topological domain" description="Cytoplasmic" evidence="9 10 19 20 21 22 23">
    <location>
        <begin position="440"/>
        <end position="451"/>
    </location>
</feature>
<feature type="transmembrane region" description="Helical; Name=2" evidence="9 10 19 20 21 22 23">
    <location>
        <begin position="452"/>
        <end position="474"/>
    </location>
</feature>
<feature type="topological domain" description="Extracellular" evidence="9 10 16 19 20 21 22 23">
    <location>
        <begin position="475"/>
        <end position="478"/>
    </location>
</feature>
<feature type="transmembrane region" description="Helical; Name=3" evidence="9 10 19 20 21 22 23">
    <location>
        <begin position="479"/>
        <end position="501"/>
    </location>
</feature>
<feature type="topological domain" description="Cytoplasmic" evidence="9 10 19 20 21 22 23">
    <location>
        <begin position="502"/>
        <end position="525"/>
    </location>
</feature>
<feature type="transmembrane region" description="Helical; Name=4" evidence="9 10 19 20 21 22 23">
    <location>
        <begin position="526"/>
        <end position="547"/>
    </location>
</feature>
<feature type="topological domain" description="Extracellular" evidence="9 10 19 20 21 22 23">
    <location>
        <begin position="548"/>
        <end position="576"/>
    </location>
</feature>
<feature type="transmembrane region" description="Helical; Name=5" evidence="9 10 19 20 21 22 23">
    <location>
        <begin position="577"/>
        <end position="597"/>
    </location>
</feature>
<feature type="topological domain" description="Cytoplasmic" evidence="9 10 19 20 21 22 23">
    <location>
        <begin position="598"/>
        <end position="611"/>
    </location>
</feature>
<feature type="transmembrane region" description="Helical; Name=6" evidence="9 10 19 20 21 22 23">
    <location>
        <begin position="612"/>
        <end position="633"/>
    </location>
</feature>
<feature type="topological domain" description="Extracellular" evidence="9 10 19 20 21 22 23">
    <location>
        <begin position="634"/>
        <end position="642"/>
    </location>
</feature>
<feature type="transmembrane region" description="Helical; Name=7" evidence="9 10 19 20 21 22 23">
    <location>
        <begin position="643"/>
        <end position="664"/>
    </location>
</feature>
<feature type="topological domain" description="Cytoplasmic" evidence="9 10 19 20 21 22 23">
    <location>
        <begin position="665"/>
        <end position="1215"/>
    </location>
</feature>
<feature type="region of interest" description="Disordered" evidence="4">
    <location>
        <begin position="23"/>
        <end position="66"/>
    </location>
</feature>
<feature type="region of interest" description="Cache-like region" evidence="9">
    <location>
        <begin position="85"/>
        <end position="281"/>
    </location>
</feature>
<feature type="region of interest" description="Disordered" evidence="4">
    <location>
        <begin position="757"/>
        <end position="999"/>
    </location>
</feature>
<feature type="region of interest" description="Disordered" evidence="4">
    <location>
        <begin position="1117"/>
        <end position="1164"/>
    </location>
</feature>
<feature type="short sequence motif" description="VCPWE motif 1" evidence="8">
    <location>
        <begin position="1006"/>
        <end position="1010"/>
    </location>
</feature>
<feature type="short sequence motif" description="VCPWE motif 2" evidence="8">
    <location>
        <begin position="1071"/>
        <end position="1075"/>
    </location>
</feature>
<feature type="short sequence motif" description="VCPWE motif 3" evidence="8">
    <location>
        <begin position="1171"/>
        <end position="1175"/>
    </location>
</feature>
<feature type="compositionally biased region" description="Basic and acidic residues" evidence="4">
    <location>
        <begin position="28"/>
        <end position="40"/>
    </location>
</feature>
<feature type="compositionally biased region" description="Low complexity" evidence="4">
    <location>
        <begin position="52"/>
        <end position="64"/>
    </location>
</feature>
<feature type="compositionally biased region" description="Basic and acidic residues" evidence="4">
    <location>
        <begin position="769"/>
        <end position="781"/>
    </location>
</feature>
<feature type="compositionally biased region" description="Basic and acidic residues" evidence="4">
    <location>
        <begin position="819"/>
        <end position="828"/>
    </location>
</feature>
<feature type="compositionally biased region" description="Basic and acidic residues" evidence="4">
    <location>
        <begin position="925"/>
        <end position="943"/>
    </location>
</feature>
<feature type="compositionally biased region" description="Polar residues" evidence="4">
    <location>
        <begin position="979"/>
        <end position="998"/>
    </location>
</feature>
<feature type="compositionally biased region" description="Basic and acidic residues" evidence="4">
    <location>
        <begin position="1139"/>
        <end position="1151"/>
    </location>
</feature>
<feature type="compositionally biased region" description="Polar residues" evidence="4">
    <location>
        <begin position="1153"/>
        <end position="1164"/>
    </location>
</feature>
<feature type="binding site" evidence="17">
    <location>
        <position position="172"/>
    </location>
    <ligand>
        <name>glycine</name>
        <dbReference type="ChEBI" id="CHEBI:57305"/>
    </ligand>
</feature>
<feature type="binding site" evidence="17">
    <location>
        <position position="173"/>
    </location>
    <ligand>
        <name>glycine</name>
        <dbReference type="ChEBI" id="CHEBI:57305"/>
    </ligand>
</feature>
<feature type="binding site" evidence="17">
    <location>
        <position position="271"/>
    </location>
    <ligand>
        <name>glycine</name>
        <dbReference type="ChEBI" id="CHEBI:57305"/>
    </ligand>
</feature>
<feature type="binding site" evidence="17">
    <location>
        <position position="307"/>
    </location>
    <ligand>
        <name>glycine</name>
        <dbReference type="ChEBI" id="CHEBI:57305"/>
    </ligand>
</feature>
<feature type="modified residue" description="Phosphoserine" evidence="2">
    <location>
        <position position="694"/>
    </location>
</feature>
<feature type="modified residue" description="Phosphoserine" evidence="2">
    <location>
        <position position="705"/>
    </location>
</feature>
<feature type="modified residue" description="Phosphoserine" evidence="2">
    <location>
        <position position="708"/>
    </location>
</feature>
<feature type="modified residue" description="Phosphoserine" evidence="2">
    <location>
        <position position="865"/>
    </location>
</feature>
<feature type="modified residue" description="Phosphoserine" evidence="2">
    <location>
        <position position="946"/>
    </location>
</feature>
<feature type="modified residue" description="Phosphoserine" evidence="1">
    <location>
        <position position="1080"/>
    </location>
</feature>
<feature type="glycosylation site" description="N-linked (GlcNAc...) asparagine" evidence="3">
    <location>
        <position position="98"/>
    </location>
</feature>
<feature type="glycosylation site" description="N-linked (GlcNAc...) asparagine" evidence="3">
    <location>
        <position position="143"/>
    </location>
</feature>
<feature type="glycosylation site" description="N-linked (GlcNAc...) asparagine" evidence="3">
    <location>
        <position position="215"/>
    </location>
</feature>
<feature type="glycosylation site" description="N-linked (GlcNAc...) asparagine" evidence="3">
    <location>
        <position position="274"/>
    </location>
</feature>
<feature type="glycosylation site" description="N-linked (GlcNAc...) asparagine" evidence="3">
    <location>
        <position position="333"/>
    </location>
</feature>
<feature type="disulfide bond" evidence="9 10 19 20 21 22 23">
    <location>
        <begin position="99"/>
        <end position="272"/>
    </location>
</feature>
<feature type="disulfide bond" evidence="9 10 19 20 21 22 23">
    <location>
        <begin position="481"/>
        <end position="573"/>
    </location>
</feature>
<feature type="cross-link" description="Glycyl lysine isopeptide (Lys-Gly) (interchain with G-Cter in ubiquitin)" evidence="5">
    <location>
        <position position="774"/>
    </location>
</feature>
<feature type="sequence variant" id="VAR_049285" description="In dbSNP:rs2480345." evidence="12">
    <original>A</original>
    <variation>G</variation>
    <location>
        <position position="425"/>
    </location>
</feature>
<feature type="sequence variant" id="VAR_049286" description="In dbSNP:rs10828833.">
    <original>I</original>
    <variation>V</variation>
    <location>
        <position position="1209"/>
    </location>
</feature>
<feature type="mutagenesis site" description="Does not affect ability to regulate cAMP levels; when associated with A-540 and A-578." evidence="10">
    <original>F</original>
    <variation>A</variation>
    <location>
        <position position="135"/>
    </location>
</feature>
<feature type="mutagenesis site" description="Nearly abolished glycine-binding and ability to inhibit the GTPase activator activity of RGS7." evidence="11">
    <original>R</original>
    <variation>A</variation>
    <location>
        <position position="173"/>
    </location>
</feature>
<feature type="mutagenesis site" description="Nearly abolished ability to inhibit the GTPase activator activity of RGS7 without affecting glycine-binding." evidence="11">
    <original>S</original>
    <variation>A</variation>
    <location>
        <position position="266"/>
    </location>
</feature>
<feature type="mutagenesis site" description="Nearly abolished glycine-binding and ability to inhibit the GTPase activator activity of RGS7." evidence="11">
    <original>Y</original>
    <variation>A</variation>
    <location>
        <position position="269"/>
    </location>
</feature>
<feature type="mutagenesis site" description="Nearly abolished glycine-binding and ability to inhibit the GTPase activator activity of RGS7." evidence="11">
    <original>E</original>
    <variation>A</variation>
    <location>
        <position position="271"/>
    </location>
</feature>
<feature type="mutagenesis site" description="Does not affect G protein alpha subunit activation." evidence="8">
    <original>K</original>
    <variation>E</variation>
    <location>
        <position position="502"/>
    </location>
</feature>
<feature type="mutagenesis site" description="Does not affect G protein alpha subunit activation." evidence="8">
    <original>R</original>
    <variation>E</variation>
    <location>
        <position position="505"/>
    </location>
</feature>
<feature type="mutagenesis site" description="Does not affect ability to regulate cAMP levels; when associated with A-135 and A-578." evidence="10">
    <original>F</original>
    <variation>A</variation>
    <location>
        <position position="540"/>
    </location>
</feature>
<feature type="mutagenesis site" description="Does not affect ability to regulate cAMP levels; when associated with A-135 and A-540." evidence="10">
    <original>W</original>
    <variation>A</variation>
    <location>
        <position position="578"/>
    </location>
</feature>
<feature type="mutagenesis site" description="Induces an increase of cAMP levels." evidence="10">
    <original>E</original>
    <variation>H</variation>
    <location>
        <position position="609"/>
    </location>
</feature>
<feature type="mutagenesis site" description="In M1 mutant; decreased localization to the nucleus." evidence="6">
    <original>KK</original>
    <variation>QQ</variation>
    <location>
        <begin position="719"/>
        <end position="720"/>
    </location>
</feature>
<feature type="mutagenesis site" description="In M2 mutant; decreased localization to the nucleus." evidence="6">
    <original>KK</original>
    <variation>QQ</variation>
    <location>
        <begin position="731"/>
        <end position="732"/>
    </location>
</feature>
<feature type="mutagenesis site" description="In Mut1; decreased interaction with GNAO1." evidence="8">
    <original>CPW</original>
    <variation>AAA</variation>
    <location>
        <begin position="1007"/>
        <end position="1009"/>
    </location>
</feature>
<feature type="mutagenesis site" description="In Mut2; does not affect interaction with GNAO1." evidence="8">
    <original>CLW</original>
    <variation>AAA</variation>
    <location>
        <begin position="1072"/>
        <end position="1074"/>
    </location>
</feature>
<feature type="mutagenesis site" description="In Mut3; decreased interaction with GNAO1." evidence="8">
    <original>CPW</original>
    <variation>AAA</variation>
    <location>
        <begin position="1172"/>
        <end position="1174"/>
    </location>
</feature>
<feature type="mutagenesis site" description="In Mut4; does not affect interaction with GNAO1." evidence="8">
    <original>CPW</original>
    <variation>AAA</variation>
    <location>
        <begin position="1172"/>
        <end position="1174"/>
    </location>
</feature>
<feature type="sequence conflict" description="In Ref. 3; BAA86450." evidence="16" ref="3">
    <original>ELIISAIFHTI</original>
    <variation>SWIVNSMNSHF</variation>
    <location>
        <begin position="620"/>
        <end position="630"/>
    </location>
</feature>
<feature type="helix" evidence="24">
    <location>
        <begin position="67"/>
        <end position="75"/>
    </location>
</feature>
<feature type="helix" evidence="24">
    <location>
        <begin position="82"/>
        <end position="86"/>
    </location>
</feature>
<feature type="helix" evidence="24">
    <location>
        <begin position="88"/>
        <end position="92"/>
    </location>
</feature>
<feature type="turn" evidence="24">
    <location>
        <begin position="107"/>
        <end position="109"/>
    </location>
</feature>
<feature type="helix" evidence="24">
    <location>
        <begin position="121"/>
        <end position="136"/>
    </location>
</feature>
<feature type="turn" evidence="24">
    <location>
        <begin position="143"/>
        <end position="146"/>
    </location>
</feature>
<feature type="helix" evidence="24">
    <location>
        <begin position="151"/>
        <end position="166"/>
    </location>
</feature>
<feature type="strand" evidence="24">
    <location>
        <begin position="169"/>
        <end position="176"/>
    </location>
</feature>
<feature type="strand" evidence="24">
    <location>
        <begin position="190"/>
        <end position="192"/>
    </location>
</feature>
<feature type="strand" evidence="24">
    <location>
        <begin position="202"/>
        <end position="204"/>
    </location>
</feature>
<feature type="strand" evidence="24">
    <location>
        <begin position="268"/>
        <end position="270"/>
    </location>
</feature>
<feature type="strand" evidence="24">
    <location>
        <begin position="273"/>
        <end position="275"/>
    </location>
</feature>
<feature type="turn" evidence="24">
    <location>
        <begin position="277"/>
        <end position="279"/>
    </location>
</feature>
<feature type="strand" evidence="24">
    <location>
        <begin position="281"/>
        <end position="288"/>
    </location>
</feature>
<feature type="strand" evidence="24">
    <location>
        <begin position="303"/>
        <end position="309"/>
    </location>
</feature>
<feature type="strand" evidence="24">
    <location>
        <begin position="318"/>
        <end position="323"/>
    </location>
</feature>
<feature type="turn" evidence="24">
    <location>
        <begin position="324"/>
        <end position="327"/>
    </location>
</feature>
<feature type="helix" evidence="24">
    <location>
        <begin position="334"/>
        <end position="336"/>
    </location>
</feature>
<feature type="strand" evidence="24">
    <location>
        <begin position="337"/>
        <end position="343"/>
    </location>
</feature>
<feature type="strand" evidence="24">
    <location>
        <begin position="386"/>
        <end position="388"/>
    </location>
</feature>
<feature type="strand" evidence="24">
    <location>
        <begin position="397"/>
        <end position="400"/>
    </location>
</feature>
<feature type="helix" evidence="24">
    <location>
        <begin position="406"/>
        <end position="408"/>
    </location>
</feature>
<feature type="helix" evidence="24">
    <location>
        <begin position="414"/>
        <end position="440"/>
    </location>
</feature>
<feature type="turn" evidence="24">
    <location>
        <begin position="441"/>
        <end position="443"/>
    </location>
</feature>
<feature type="helix" evidence="24">
    <location>
        <begin position="445"/>
        <end position="448"/>
    </location>
</feature>
<feature type="helix" evidence="24">
    <location>
        <begin position="452"/>
        <end position="464"/>
    </location>
</feature>
<feature type="helix" evidence="24">
    <location>
        <begin position="470"/>
        <end position="473"/>
    </location>
</feature>
<feature type="helix" evidence="24">
    <location>
        <begin position="480"/>
        <end position="495"/>
    </location>
</feature>
<feature type="turn" evidence="24">
    <location>
        <begin position="496"/>
        <end position="498"/>
    </location>
</feature>
<feature type="helix" evidence="24">
    <location>
        <begin position="499"/>
        <end position="513"/>
    </location>
</feature>
<feature type="turn" evidence="24">
    <location>
        <begin position="523"/>
        <end position="525"/>
    </location>
</feature>
<feature type="turn" evidence="24">
    <location>
        <begin position="527"/>
        <end position="529"/>
    </location>
</feature>
<feature type="helix" evidence="24">
    <location>
        <begin position="530"/>
        <end position="548"/>
    </location>
</feature>
<feature type="strand" evidence="24">
    <location>
        <begin position="549"/>
        <end position="551"/>
    </location>
</feature>
<feature type="turn" evidence="24">
    <location>
        <begin position="552"/>
        <end position="554"/>
    </location>
</feature>
<feature type="strand" evidence="24">
    <location>
        <begin position="558"/>
        <end position="563"/>
    </location>
</feature>
<feature type="strand" evidence="24">
    <location>
        <begin position="565"/>
        <end position="567"/>
    </location>
</feature>
<feature type="strand" evidence="24">
    <location>
        <begin position="569"/>
        <end position="573"/>
    </location>
</feature>
<feature type="helix" evidence="24">
    <location>
        <begin position="581"/>
        <end position="583"/>
    </location>
</feature>
<feature type="helix" evidence="24">
    <location>
        <begin position="584"/>
        <end position="599"/>
    </location>
</feature>
<feature type="strand" evidence="24">
    <location>
        <begin position="601"/>
        <end position="603"/>
    </location>
</feature>
<feature type="helix" evidence="24">
    <location>
        <begin position="609"/>
        <end position="633"/>
    </location>
</feature>
<feature type="strand" evidence="24">
    <location>
        <begin position="635"/>
        <end position="637"/>
    </location>
</feature>
<feature type="helix" evidence="24">
    <location>
        <begin position="641"/>
        <end position="650"/>
    </location>
</feature>
<feature type="turn" evidence="24">
    <location>
        <begin position="651"/>
        <end position="654"/>
    </location>
</feature>
<feature type="helix" evidence="24">
    <location>
        <begin position="655"/>
        <end position="661"/>
    </location>
</feature>
<feature type="helix" evidence="24">
    <location>
        <begin position="664"/>
        <end position="667"/>
    </location>
</feature>
<feature type="helix" evidence="25">
    <location>
        <begin position="713"/>
        <end position="729"/>
    </location>
</feature>
<keyword id="KW-0002">3D-structure</keyword>
<keyword id="KW-1003">Cell membrane</keyword>
<keyword id="KW-0966">Cell projection</keyword>
<keyword id="KW-1015">Disulfide bond</keyword>
<keyword id="KW-0297">G-protein coupled receptor</keyword>
<keyword id="KW-0325">Glycoprotein</keyword>
<keyword id="KW-1017">Isopeptide bond</keyword>
<keyword id="KW-0472">Membrane</keyword>
<keyword id="KW-0539">Nucleus</keyword>
<keyword id="KW-0597">Phosphoprotein</keyword>
<keyword id="KW-0628">Postsynaptic cell membrane</keyword>
<keyword id="KW-1267">Proteomics identification</keyword>
<keyword id="KW-0675">Receptor</keyword>
<keyword id="KW-1185">Reference proteome</keyword>
<keyword id="KW-0677">Repeat</keyword>
<keyword id="KW-0732">Signal</keyword>
<keyword id="KW-0770">Synapse</keyword>
<keyword id="KW-0807">Transducer</keyword>
<keyword id="KW-0812">Transmembrane</keyword>
<keyword id="KW-1133">Transmembrane helix</keyword>
<keyword id="KW-0832">Ubl conjugation</keyword>
<comment type="function">
    <text evidence="2 8 11">Metabotropic receptor for glycine that controls synapse formation and function in the brain (PubMed:36996198). Acts as an atypical G-protein coupled receptor that recruits and regulates the RGS7-GNB5 complex instead of activating G proteins (PubMed:31189666, PubMed:36996198). In absence of glycine ligand, promotes the GTPase activator activity of RGS7, increasing the GTPase activity of G protein alpha subunits, thereby driving them into their inactive GDP-bound form (PubMed:36996198). Glycine-binding changes the conformation of the intracellular surface, inhibiting the GTPase activator activity of the RGS7-GNB5 complex, promoting G protein alpha subunits into their active GTP-bound form and regulating cAMP levels (PubMed:36996198). Also able to bind taurine, a compound closely related to glycine, but with a two-fold lower affinity (PubMed:36996198). Glycine receptor-dependent regulation of cAMP controls key ion channels, kinases and neurotrophic factors involved in neuronal excitability and synaptic transmission (PubMed:36996198). Plays a pivotal role in regulating mood and cognition via its ability to regulate neuronal excitability in L2/L3 pyramidal neurons of the prefrontal cortex (By similarity). Also involved in spatial learning by regulating hippocampal CA1 neuronal excitability (By similarity). Acts as a synaptic organizer in the hippocampus, required for proper mossy fiber-CA3 neurocircuitry establishment, structure and function: induces presynaptic differentiation in contacting axons via its interaction with GPC4 (By similarity). In addition to glycine, may also act as a receptor for osteocalcin (BGLAP) hormone: osteocalcin-binding initiates a signaling response that prevents neuronal apoptosis in the hippocampus and regulates the synthesis of neurotransmitters (By similarity).</text>
</comment>
<comment type="subunit">
    <text evidence="1 2 8 9 10">Homodimer (PubMed:31189666, PubMed:34793198, PubMed:34815401). Associates with the RGS7-GNB5 complex, promoting its localization to the cell membrane and regulating its GTPase activator activity (PubMed:31189666, PubMed:34793198, PubMed:34815401). Interacts (via VCPWE motifs) with GNAO1 (PubMed:31189666). Interacts with GPC4 (By similarity). Interacts with EGFLAM (By similarity).</text>
</comment>
<comment type="subcellular location">
    <subcellularLocation>
        <location evidence="6 7 8">Cell membrane</location>
        <topology evidence="9 10">Multi-pass membrane protein</topology>
    </subcellularLocation>
    <subcellularLocation>
        <location evidence="2">Postsynaptic cell membrane</location>
        <topology evidence="9 10">Multi-pass membrane protein</topology>
    </subcellularLocation>
    <subcellularLocation>
        <location evidence="2">Presynaptic cell membrane</location>
        <topology evidence="9 10">Multi-pass membrane protein</topology>
    </subcellularLocation>
    <subcellularLocation>
        <location evidence="6 7">Nucleus</location>
    </subcellularLocation>
    <text evidence="2 6">Mainly localizes to the postsynaptic membrane, with a small portion to the presynaptic membrane (By similarity). Trafficks between the nucleus and the cell membrane; it is unclear how a multi-pass membrane protein can traffick between the nucleus and the cell membrane (PubMed:23451275).</text>
</comment>
<comment type="domain">
    <text evidence="9 11">The Cache-like region shares similarity with the Cache domain, a well-known receptor for amino acids (PubMed:34793198). It acts as a ligand-binding module that recognizes and binds glycine and taurine (PubMed:36996198).</text>
</comment>
<comment type="similarity">
    <text evidence="16">Belongs to the G-protein coupled receptor 3 family.</text>
</comment>
<comment type="sequence caution" evidence="16">
    <conflict type="erroneous initiation">
        <sequence resource="EMBL-CDS" id="AAS18315"/>
    </conflict>
</comment>
<evidence type="ECO:0000250" key="1">
    <source>
        <dbReference type="UniProtKB" id="D4A6L0"/>
    </source>
</evidence>
<evidence type="ECO:0000250" key="2">
    <source>
        <dbReference type="UniProtKB" id="Q8C419"/>
    </source>
</evidence>
<evidence type="ECO:0000255" key="3"/>
<evidence type="ECO:0000256" key="4">
    <source>
        <dbReference type="SAM" id="MobiDB-lite"/>
    </source>
</evidence>
<evidence type="ECO:0000269" key="5">
    <source>
    </source>
</evidence>
<evidence type="ECO:0000269" key="6">
    <source>
    </source>
</evidence>
<evidence type="ECO:0000269" key="7">
    <source>
    </source>
</evidence>
<evidence type="ECO:0000269" key="8">
    <source>
    </source>
</evidence>
<evidence type="ECO:0000269" key="9">
    <source>
    </source>
</evidence>
<evidence type="ECO:0000269" key="10">
    <source>
    </source>
</evidence>
<evidence type="ECO:0000269" key="11">
    <source>
    </source>
</evidence>
<evidence type="ECO:0000269" key="12">
    <source ref="1"/>
</evidence>
<evidence type="ECO:0000303" key="13">
    <source>
    </source>
</evidence>
<evidence type="ECO:0000303" key="14">
    <source>
    </source>
</evidence>
<evidence type="ECO:0000303" key="15">
    <source ref="1"/>
</evidence>
<evidence type="ECO:0000305" key="16"/>
<evidence type="ECO:0000305" key="17">
    <source>
    </source>
</evidence>
<evidence type="ECO:0000312" key="18">
    <source>
        <dbReference type="HGNC" id="HGNC:23689"/>
    </source>
</evidence>
<evidence type="ECO:0007744" key="19">
    <source>
        <dbReference type="PDB" id="7EWL"/>
    </source>
</evidence>
<evidence type="ECO:0007744" key="20">
    <source>
        <dbReference type="PDB" id="7EWP"/>
    </source>
</evidence>
<evidence type="ECO:0007744" key="21">
    <source>
        <dbReference type="PDB" id="7EWR"/>
    </source>
</evidence>
<evidence type="ECO:0007744" key="22">
    <source>
        <dbReference type="PDB" id="7SHE"/>
    </source>
</evidence>
<evidence type="ECO:0007744" key="23">
    <source>
        <dbReference type="PDB" id="7SHF"/>
    </source>
</evidence>
<evidence type="ECO:0007829" key="24">
    <source>
        <dbReference type="PDB" id="7SHE"/>
    </source>
</evidence>
<evidence type="ECO:0007829" key="25">
    <source>
        <dbReference type="PDB" id="7SHF"/>
    </source>
</evidence>
<name>MGLYR_HUMAN</name>
<reference key="1">
    <citation type="submission" date="2004-01" db="EMBL/GenBank/DDBJ databases">
        <title>Complete coding sequence of GPR158.</title>
        <authorList>
            <person name="Bonner T.I."/>
            <person name="Nagle J.W."/>
            <person name="Kauffman D."/>
        </authorList>
    </citation>
    <scope>NUCLEOTIDE SEQUENCE [MRNA]</scope>
    <scope>VARIANT GLY-425</scope>
    <source>
        <tissue>Brain</tissue>
    </source>
</reference>
<reference key="2">
    <citation type="journal article" date="2004" name="Nature">
        <title>The DNA sequence and comparative analysis of human chromosome 10.</title>
        <authorList>
            <person name="Deloukas P."/>
            <person name="Earthrowl M.E."/>
            <person name="Grafham D.V."/>
            <person name="Rubenfield M."/>
            <person name="French L."/>
            <person name="Steward C.A."/>
            <person name="Sims S.K."/>
            <person name="Jones M.C."/>
            <person name="Searle S."/>
            <person name="Scott C."/>
            <person name="Howe K."/>
            <person name="Hunt S.E."/>
            <person name="Andrews T.D."/>
            <person name="Gilbert J.G.R."/>
            <person name="Swarbreck D."/>
            <person name="Ashurst J.L."/>
            <person name="Taylor A."/>
            <person name="Battles J."/>
            <person name="Bird C.P."/>
            <person name="Ainscough R."/>
            <person name="Almeida J.P."/>
            <person name="Ashwell R.I.S."/>
            <person name="Ambrose K.D."/>
            <person name="Babbage A.K."/>
            <person name="Bagguley C.L."/>
            <person name="Bailey J."/>
            <person name="Banerjee R."/>
            <person name="Bates K."/>
            <person name="Beasley H."/>
            <person name="Bray-Allen S."/>
            <person name="Brown A.J."/>
            <person name="Brown J.Y."/>
            <person name="Burford D.C."/>
            <person name="Burrill W."/>
            <person name="Burton J."/>
            <person name="Cahill P."/>
            <person name="Camire D."/>
            <person name="Carter N.P."/>
            <person name="Chapman J.C."/>
            <person name="Clark S.Y."/>
            <person name="Clarke G."/>
            <person name="Clee C.M."/>
            <person name="Clegg S."/>
            <person name="Corby N."/>
            <person name="Coulson A."/>
            <person name="Dhami P."/>
            <person name="Dutta I."/>
            <person name="Dunn M."/>
            <person name="Faulkner L."/>
            <person name="Frankish A."/>
            <person name="Frankland J.A."/>
            <person name="Garner P."/>
            <person name="Garnett J."/>
            <person name="Gribble S."/>
            <person name="Griffiths C."/>
            <person name="Grocock R."/>
            <person name="Gustafson E."/>
            <person name="Hammond S."/>
            <person name="Harley J.L."/>
            <person name="Hart E."/>
            <person name="Heath P.D."/>
            <person name="Ho T.P."/>
            <person name="Hopkins B."/>
            <person name="Horne J."/>
            <person name="Howden P.J."/>
            <person name="Huckle E."/>
            <person name="Hynds C."/>
            <person name="Johnson C."/>
            <person name="Johnson D."/>
            <person name="Kana A."/>
            <person name="Kay M."/>
            <person name="Kimberley A.M."/>
            <person name="Kershaw J.K."/>
            <person name="Kokkinaki M."/>
            <person name="Laird G.K."/>
            <person name="Lawlor S."/>
            <person name="Lee H.M."/>
            <person name="Leongamornlert D.A."/>
            <person name="Laird G."/>
            <person name="Lloyd C."/>
            <person name="Lloyd D.M."/>
            <person name="Loveland J."/>
            <person name="Lovell J."/>
            <person name="McLaren S."/>
            <person name="McLay K.E."/>
            <person name="McMurray A."/>
            <person name="Mashreghi-Mohammadi M."/>
            <person name="Matthews L."/>
            <person name="Milne S."/>
            <person name="Nickerson T."/>
            <person name="Nguyen M."/>
            <person name="Overton-Larty E."/>
            <person name="Palmer S.A."/>
            <person name="Pearce A.V."/>
            <person name="Peck A.I."/>
            <person name="Pelan S."/>
            <person name="Phillimore B."/>
            <person name="Porter K."/>
            <person name="Rice C.M."/>
            <person name="Rogosin A."/>
            <person name="Ross M.T."/>
            <person name="Sarafidou T."/>
            <person name="Sehra H.K."/>
            <person name="Shownkeen R."/>
            <person name="Skuce C.D."/>
            <person name="Smith M."/>
            <person name="Standring L."/>
            <person name="Sycamore N."/>
            <person name="Tester J."/>
            <person name="Thorpe A."/>
            <person name="Torcasso W."/>
            <person name="Tracey A."/>
            <person name="Tromans A."/>
            <person name="Tsolas J."/>
            <person name="Wall M."/>
            <person name="Walsh J."/>
            <person name="Wang H."/>
            <person name="Weinstock K."/>
            <person name="West A.P."/>
            <person name="Willey D.L."/>
            <person name="Whitehead S.L."/>
            <person name="Wilming L."/>
            <person name="Wray P.W."/>
            <person name="Young L."/>
            <person name="Chen Y."/>
            <person name="Lovering R.C."/>
            <person name="Moschonas N.K."/>
            <person name="Siebert R."/>
            <person name="Fechtel K."/>
            <person name="Bentley D."/>
            <person name="Durbin R.M."/>
            <person name="Hubbard T."/>
            <person name="Doucette-Stamm L."/>
            <person name="Beck S."/>
            <person name="Smith D.R."/>
            <person name="Rogers J."/>
        </authorList>
    </citation>
    <scope>NUCLEOTIDE SEQUENCE [LARGE SCALE GENOMIC DNA]</scope>
</reference>
<reference key="3">
    <citation type="journal article" date="1999" name="DNA Res.">
        <title>Characterization of cDNA clones selected by the GeneMark analysis from size-fractionated cDNA libraries from human brain.</title>
        <authorList>
            <person name="Hirosawa M."/>
            <person name="Nagase T."/>
            <person name="Ishikawa K."/>
            <person name="Kikuno R."/>
            <person name="Nomura N."/>
            <person name="Ohara O."/>
        </authorList>
    </citation>
    <scope>NUCLEOTIDE SEQUENCE [LARGE SCALE MRNA] OF 620-1215</scope>
    <source>
        <tissue>Brain</tissue>
    </source>
</reference>
<reference key="4">
    <citation type="journal article" date="2002" name="DNA Res.">
        <title>Construction of expression-ready cDNA clones for KIAA genes: manual curation of 330 KIAA cDNA clones.</title>
        <authorList>
            <person name="Nakajima D."/>
            <person name="Okazaki N."/>
            <person name="Yamakawa H."/>
            <person name="Kikuno R."/>
            <person name="Ohara O."/>
            <person name="Nagase T."/>
        </authorList>
    </citation>
    <scope>SEQUENCE REVISION</scope>
</reference>
<reference key="5">
    <citation type="journal article" date="2008" name="Proteomics">
        <title>Proteomic analysis of ubiquitinated proteins in normal hepatocyte cell line Chang liver cells.</title>
        <authorList>
            <person name="Tan F."/>
            <person name="Lu L."/>
            <person name="Cai Y."/>
            <person name="Wang J."/>
            <person name="Xie Y."/>
            <person name="Wang L."/>
            <person name="Gong Y."/>
            <person name="Xu B.-E."/>
            <person name="Wu J."/>
            <person name="Luo Y."/>
            <person name="Qiang B."/>
            <person name="Yuan J."/>
            <person name="Sun X."/>
            <person name="Peng X."/>
        </authorList>
    </citation>
    <scope>UBIQUITINATION [LARGE SCALE ANALYSIS] AT LYS-774</scope>
    <scope>IDENTIFICATION BY MASS SPECTROMETRY</scope>
    <source>
        <tissue>Liver</tissue>
    </source>
</reference>
<reference key="6">
    <citation type="journal article" date="2013" name="PLoS ONE">
        <title>GPR158, an orphan member of G protein-coupled receptor Family C: glucocorticoid-stimulated expression and novel nuclear role.</title>
        <authorList>
            <person name="Patel N."/>
            <person name="Itakura T."/>
            <person name="Gonzalez J.M. Jr."/>
            <person name="Schwartz S.G."/>
            <person name="Fini M.E."/>
        </authorList>
    </citation>
    <scope>SUBCELLULAR LOCATION</scope>
    <scope>MUTAGENESIS OF 719-LYS-LYS-720 AND 731-LYS-LYS-732</scope>
</reference>
<reference key="7">
    <citation type="journal article" date="2019" name="J. Ocul. Pharmacol. Ther.">
        <title>GPR158 in the visual system: homeostatic role in regulation of intraocular pressure.</title>
        <authorList>
            <person name="Itakura T."/>
            <person name="Webster A."/>
            <person name="Chintala S.K."/>
            <person name="Wang Y."/>
            <person name="Gonzalez J.M. Jr."/>
            <person name="Tan J.C."/>
            <person name="Vranka J.A."/>
            <person name="Acott T."/>
            <person name="Craft C.M."/>
            <person name="Sibug Saber M.E."/>
            <person name="Jeong S."/>
            <person name="Stamer W.D."/>
            <person name="Martemyanov K.A."/>
            <person name="Fini M.E."/>
        </authorList>
    </citation>
    <scope>SUBCELLULAR LOCATION</scope>
</reference>
<reference key="8">
    <citation type="journal article" date="2019" name="Mol. Pharmacol.">
        <title>Nonclassical ligand-independent regulation of Go protein by an orphan class C G-protein-coupled receptor.</title>
        <authorList>
            <person name="Hajj M."/>
            <person name="De Vita T."/>
            <person name="Vol C."/>
            <person name="Renassia C."/>
            <person name="Bologna J.C."/>
            <person name="Brabet I."/>
            <person name="Cazade M."/>
            <person name="Pastore M."/>
            <person name="Blahos J."/>
            <person name="Labesse G."/>
            <person name="Pin J.P."/>
            <person name="Prezeau L."/>
        </authorList>
    </citation>
    <scope>FUNCTION</scope>
    <scope>SUBCELLULAR LOCATION</scope>
    <scope>INTERACTION WITH GNAO1 AND RGS7</scope>
    <scope>MUTAGENESIS OF LYS-502; ARG-505; 1007-CYS--TRP-1009; 1072-CYS--TRP-1074 AND 1172-CYS--TRP-1174</scope>
</reference>
<reference key="9">
    <citation type="journal article" date="2023" name="Science">
        <title>Orphan receptor GPR158 serves as a metabotropic glycine receptor: mGlyR.</title>
        <authorList>
            <person name="Laboute T."/>
            <person name="Zucca S."/>
            <person name="Holcomb M."/>
            <person name="Patil D.N."/>
            <person name="Garza C."/>
            <person name="Wheatley B.A."/>
            <person name="Roy R.N."/>
            <person name="Forli S."/>
            <person name="Martemyanov K.A."/>
        </authorList>
    </citation>
    <scope>FUNCTION</scope>
    <scope>INTERACTION WITH THE RGS7-GNB5 COMPLEX</scope>
    <scope>DOMAIN</scope>
    <scope>MUTAGENESIS OF ARG-173; SER-266; TYR-269 AND GLU-271</scope>
</reference>
<reference evidence="19 20 21" key="10">
    <citation type="journal article" date="2021" name="Nat. Commun.">
        <title>Structure of the class C orphan GPCR GPR158 in complex with RGS7-Gbeta5.</title>
        <authorList>
            <person name="Jeong E."/>
            <person name="Kim Y."/>
            <person name="Jeong J."/>
            <person name="Cho Y."/>
        </authorList>
    </citation>
    <scope>STRUCTURE BY ELECTRON MICROSCOPY (3.52 ANGSTROMS) OF 24-710 IN COMPLEX WITH GNB5 AND RGS7</scope>
    <scope>INTERACTION WITH THE RGS7-GNB5 COMPLEX</scope>
    <scope>MUTAGENESIS OF PHE-135; PHE-540; TRP-578 AND GLU-609</scope>
</reference>
<reference evidence="22 23" key="11">
    <citation type="journal article" date="2022" name="Science">
        <title>Cryo-EM structure of human GPR158 receptor coupled to the RGS7-Gbeta5 signaling complex.</title>
        <authorList>
            <person name="Patil D.N."/>
            <person name="Singh S."/>
            <person name="Laboute T."/>
            <person name="Strutzenberg T.S."/>
            <person name="Qiu X."/>
            <person name="Wu D."/>
            <person name="Novick S.J."/>
            <person name="Robinson C.V."/>
            <person name="Griffin P.R."/>
            <person name="Hunt J.F."/>
            <person name="Izard T."/>
            <person name="Singh A.K."/>
            <person name="Martemyanov K.A."/>
        </authorList>
    </citation>
    <scope>STRUCTURE BY ELECTRON MICROSCOPY (3.40 ANGSTROMS) OF 1-775 IN COMPLEX WITH GNB5 AND RGS7</scope>
    <scope>INTERACTION WITH THE RGS7-GNB5 COMPLEX</scope>
    <scope>DOMAIN</scope>
</reference>
<accession>Q5T848</accession>
<accession>Q6QR81</accession>
<accession>Q9ULT3</accession>
<proteinExistence type="evidence at protein level"/>
<protein>
    <recommendedName>
        <fullName evidence="14">Metabotropic glycine receptor</fullName>
        <shortName evidence="14">mGlyR</shortName>
    </recommendedName>
    <alternativeName>
        <fullName evidence="16">G-protein coupled receptor 158</fullName>
    </alternativeName>
</protein>